<gene>
    <name type="primary">slc20a1-a</name>
</gene>
<name>S20AA_XENLA</name>
<protein>
    <recommendedName>
        <fullName>Sodium-dependent phosphate transporter 1-A</fullName>
    </recommendedName>
    <alternativeName>
        <fullName>Solute carrier family 20 member 1-A</fullName>
    </alternativeName>
</protein>
<keyword id="KW-0472">Membrane</keyword>
<keyword id="KW-0592">Phosphate transport</keyword>
<keyword id="KW-1185">Reference proteome</keyword>
<keyword id="KW-0769">Symport</keyword>
<keyword id="KW-0812">Transmembrane</keyword>
<keyword id="KW-1133">Transmembrane helix</keyword>
<keyword id="KW-0813">Transport</keyword>
<organism>
    <name type="scientific">Xenopus laevis</name>
    <name type="common">African clawed frog</name>
    <dbReference type="NCBI Taxonomy" id="8355"/>
    <lineage>
        <taxon>Eukaryota</taxon>
        <taxon>Metazoa</taxon>
        <taxon>Chordata</taxon>
        <taxon>Craniata</taxon>
        <taxon>Vertebrata</taxon>
        <taxon>Euteleostomi</taxon>
        <taxon>Amphibia</taxon>
        <taxon>Batrachia</taxon>
        <taxon>Anura</taxon>
        <taxon>Pipoidea</taxon>
        <taxon>Pipidae</taxon>
        <taxon>Xenopodinae</taxon>
        <taxon>Xenopus</taxon>
        <taxon>Xenopus</taxon>
    </lineage>
</organism>
<comment type="function">
    <text evidence="1">Sodium-phosphate symporter which plays a fundamental housekeeping role in phosphate transport.</text>
</comment>
<comment type="subcellular location">
    <subcellularLocation>
        <location evidence="4">Membrane</location>
        <topology evidence="4">Multi-pass membrane protein</topology>
    </subcellularLocation>
</comment>
<comment type="similarity">
    <text evidence="4">Belongs to the inorganic phosphate transporter (PiT) (TC 2.A.20) family.</text>
</comment>
<dbReference type="EMBL" id="BC080010">
    <property type="protein sequence ID" value="AAH80010.1"/>
    <property type="molecule type" value="mRNA"/>
</dbReference>
<dbReference type="RefSeq" id="NP_001087494.1">
    <property type="nucleotide sequence ID" value="NM_001094025.1"/>
</dbReference>
<dbReference type="RefSeq" id="XP_018109798.1">
    <property type="nucleotide sequence ID" value="XM_018254309.1"/>
</dbReference>
<dbReference type="SMR" id="Q68F35"/>
<dbReference type="DNASU" id="447318"/>
<dbReference type="GeneID" id="447318"/>
<dbReference type="KEGG" id="xla:447318"/>
<dbReference type="AGR" id="Xenbase:XB-GENE-6254012"/>
<dbReference type="CTD" id="447318"/>
<dbReference type="Xenbase" id="XB-GENE-6254012">
    <property type="gene designation" value="slc20a1.S"/>
</dbReference>
<dbReference type="OrthoDB" id="260807at2759"/>
<dbReference type="Proteomes" id="UP000186698">
    <property type="component" value="Chromosome 3S"/>
</dbReference>
<dbReference type="Bgee" id="447318">
    <property type="expression patterns" value="Expressed in blastula and 19 other cell types or tissues"/>
</dbReference>
<dbReference type="GO" id="GO:0016020">
    <property type="term" value="C:membrane"/>
    <property type="evidence" value="ECO:0007669"/>
    <property type="project" value="UniProtKB-SubCell"/>
</dbReference>
<dbReference type="GO" id="GO:0005315">
    <property type="term" value="F:phosphate transmembrane transporter activity"/>
    <property type="evidence" value="ECO:0000318"/>
    <property type="project" value="GO_Central"/>
</dbReference>
<dbReference type="GO" id="GO:0015293">
    <property type="term" value="F:symporter activity"/>
    <property type="evidence" value="ECO:0007669"/>
    <property type="project" value="UniProtKB-KW"/>
</dbReference>
<dbReference type="GO" id="GO:0035435">
    <property type="term" value="P:phosphate ion transmembrane transport"/>
    <property type="evidence" value="ECO:0000318"/>
    <property type="project" value="GO_Central"/>
</dbReference>
<dbReference type="InterPro" id="IPR001204">
    <property type="entry name" value="Phos_transporter"/>
</dbReference>
<dbReference type="PANTHER" id="PTHR11101">
    <property type="entry name" value="PHOSPHATE TRANSPORTER"/>
    <property type="match status" value="1"/>
</dbReference>
<dbReference type="PANTHER" id="PTHR11101:SF46">
    <property type="entry name" value="SODIUM-DEPENDENT PHOSPHATE TRANSPORTER 1"/>
    <property type="match status" value="1"/>
</dbReference>
<dbReference type="Pfam" id="PF01384">
    <property type="entry name" value="PHO4"/>
    <property type="match status" value="1"/>
</dbReference>
<accession>Q68F35</accession>
<sequence length="685" mass="74609">MESTTAFSAVTSALGTLDVHIMAPYLWMLVLGFVIAFVLAFSVGANDVANSFGTAVGSGVVTLRQACILASIFETVGSVLLGAKVSETIRKGLIDVTMYNSTQELLMAGSISAMFGSAVWQLAASFMKLPISGTHCIVGATIGFSLVAKGQQGVKWIELLRIVLSWFISPLLSGIMSALLFLFVRMFILRKADPVPNGLRALPVFYACTIGINLFSIMFTGAPLLGFDKVPLWGIILISVGCAVLCALIVWFVVCPRMKRKIECEFKSSPSESPLMDKKNQELRCPILKPDPEDLKLPVDGGIVAEVKVPILDMVSVSRTEERTVTFKMGECDDPIEKEKLNSMETNIDQPTNGSVQLPNGNHVQFSQAVSNQMNSSGQYQYHTVHKDSGLYKDLLHKLHLAKMGDCMGDSGDKPLRRNNSYTSYTMAICGMPLDSLRNRDTEARPDEAEKSTVHGADGKKRIRMDSYTSYCNAVADTHMDVEAEEQEEGSVEDVETDRKSSSSSLEERHDQDKPEVSLLFQFLQILTACFGSFAHGGNDVSNAIGPLVALYLVYETGDVTTKAATPIWLLLYGGIGICIGLWVWGRRVIQTMGKDLTPITPSSGFSIELASALTVVIASNVGLPISTTHCKVGSVVSVGWLRSKKAVDWRLFRNIFLAWFVTVPISGLISAGIMALFKYAILKV</sequence>
<reference key="1">
    <citation type="submission" date="2004-08" db="EMBL/GenBank/DDBJ databases">
        <authorList>
            <consortium name="NIH - Xenopus Gene Collection (XGC) project"/>
        </authorList>
    </citation>
    <scope>NUCLEOTIDE SEQUENCE [LARGE SCALE MRNA]</scope>
    <source>
        <tissue>Kidney</tissue>
    </source>
</reference>
<feature type="chain" id="PRO_0000080777" description="Sodium-dependent phosphate transporter 1-A">
    <location>
        <begin position="1"/>
        <end position="685"/>
    </location>
</feature>
<feature type="transmembrane region" description="Helical" evidence="2">
    <location>
        <begin position="21"/>
        <end position="41"/>
    </location>
</feature>
<feature type="transmembrane region" description="Helical" evidence="2">
    <location>
        <begin position="66"/>
        <end position="86"/>
    </location>
</feature>
<feature type="transmembrane region" description="Helical" evidence="2">
    <location>
        <begin position="106"/>
        <end position="126"/>
    </location>
</feature>
<feature type="transmembrane region" description="Helical" evidence="2">
    <location>
        <begin position="162"/>
        <end position="182"/>
    </location>
</feature>
<feature type="transmembrane region" description="Helical" evidence="2">
    <location>
        <begin position="207"/>
        <end position="227"/>
    </location>
</feature>
<feature type="transmembrane region" description="Helical" evidence="2">
    <location>
        <begin position="234"/>
        <end position="254"/>
    </location>
</feature>
<feature type="transmembrane region" description="Helical" evidence="2">
    <location>
        <begin position="517"/>
        <end position="537"/>
    </location>
</feature>
<feature type="transmembrane region" description="Helical" evidence="2">
    <location>
        <begin position="565"/>
        <end position="585"/>
    </location>
</feature>
<feature type="transmembrane region" description="Helical" evidence="2">
    <location>
        <begin position="606"/>
        <end position="626"/>
    </location>
</feature>
<feature type="transmembrane region" description="Helical" evidence="2">
    <location>
        <begin position="656"/>
        <end position="676"/>
    </location>
</feature>
<feature type="region of interest" description="Disordered" evidence="3">
    <location>
        <begin position="438"/>
        <end position="458"/>
    </location>
</feature>
<feature type="region of interest" description="Disordered" evidence="3">
    <location>
        <begin position="483"/>
        <end position="513"/>
    </location>
</feature>
<feature type="compositionally biased region" description="Acidic residues" evidence="3">
    <location>
        <begin position="483"/>
        <end position="496"/>
    </location>
</feature>
<feature type="compositionally biased region" description="Basic and acidic residues" evidence="3">
    <location>
        <begin position="497"/>
        <end position="513"/>
    </location>
</feature>
<proteinExistence type="evidence at transcript level"/>
<evidence type="ECO:0000250" key="1"/>
<evidence type="ECO:0000255" key="2"/>
<evidence type="ECO:0000256" key="3">
    <source>
        <dbReference type="SAM" id="MobiDB-lite"/>
    </source>
</evidence>
<evidence type="ECO:0000305" key="4"/>